<proteinExistence type="inferred from homology"/>
<feature type="chain" id="PRO_0000155180" description="Phosphate-specific transport system accessory protein PhoU homolog">
    <location>
        <begin position="1"/>
        <end position="216"/>
    </location>
</feature>
<dbReference type="EMBL" id="AF118229">
    <property type="protein sequence ID" value="AAD22042.1"/>
    <property type="molecule type" value="Genomic_DNA"/>
</dbReference>
<dbReference type="EMBL" id="AE007317">
    <property type="protein sequence ID" value="AAL00701.1"/>
    <property type="molecule type" value="Genomic_DNA"/>
</dbReference>
<dbReference type="PIR" id="H98108">
    <property type="entry name" value="H98108"/>
</dbReference>
<dbReference type="RefSeq" id="NP_359490.1">
    <property type="nucleotide sequence ID" value="NC_003098.1"/>
</dbReference>
<dbReference type="RefSeq" id="WP_001245781.1">
    <property type="nucleotide sequence ID" value="NC_003098.1"/>
</dbReference>
<dbReference type="SMR" id="P0A3Y8"/>
<dbReference type="STRING" id="171101.spr1899"/>
<dbReference type="GeneID" id="45652678"/>
<dbReference type="KEGG" id="spr:spr1899"/>
<dbReference type="PATRIC" id="fig|171101.6.peg.2048"/>
<dbReference type="eggNOG" id="COG0704">
    <property type="taxonomic scope" value="Bacteria"/>
</dbReference>
<dbReference type="HOGENOM" id="CLU_078518_3_0_9"/>
<dbReference type="Proteomes" id="UP000000586">
    <property type="component" value="Chromosome"/>
</dbReference>
<dbReference type="GO" id="GO:0005737">
    <property type="term" value="C:cytoplasm"/>
    <property type="evidence" value="ECO:0000250"/>
    <property type="project" value="UniProtKB"/>
</dbReference>
<dbReference type="GO" id="GO:0042803">
    <property type="term" value="F:protein homodimerization activity"/>
    <property type="evidence" value="ECO:0000250"/>
    <property type="project" value="UniProtKB"/>
</dbReference>
<dbReference type="GO" id="GO:0030643">
    <property type="term" value="P:intracellular phosphate ion homeostasis"/>
    <property type="evidence" value="ECO:0007669"/>
    <property type="project" value="InterPro"/>
</dbReference>
<dbReference type="GO" id="GO:0045936">
    <property type="term" value="P:negative regulation of phosphate metabolic process"/>
    <property type="evidence" value="ECO:0000250"/>
    <property type="project" value="UniProtKB"/>
</dbReference>
<dbReference type="GO" id="GO:2000186">
    <property type="term" value="P:negative regulation of phosphate transmembrane transport"/>
    <property type="evidence" value="ECO:0000250"/>
    <property type="project" value="UniProtKB"/>
</dbReference>
<dbReference type="GO" id="GO:0006817">
    <property type="term" value="P:phosphate ion transport"/>
    <property type="evidence" value="ECO:0007669"/>
    <property type="project" value="UniProtKB-KW"/>
</dbReference>
<dbReference type="FunFam" id="1.20.58.220:FF:000004">
    <property type="entry name" value="Phosphate-specific transport system accessory protein PhoU"/>
    <property type="match status" value="1"/>
</dbReference>
<dbReference type="Gene3D" id="1.20.58.220">
    <property type="entry name" value="Phosphate transport system protein phou homolog 2, domain 2"/>
    <property type="match status" value="1"/>
</dbReference>
<dbReference type="InterPro" id="IPR028366">
    <property type="entry name" value="P_transport_PhoU"/>
</dbReference>
<dbReference type="InterPro" id="IPR038078">
    <property type="entry name" value="PhoU-like_sf"/>
</dbReference>
<dbReference type="InterPro" id="IPR026022">
    <property type="entry name" value="PhoU_dom"/>
</dbReference>
<dbReference type="NCBIfam" id="TIGR02135">
    <property type="entry name" value="phoU_full"/>
    <property type="match status" value="1"/>
</dbReference>
<dbReference type="PANTHER" id="PTHR42930">
    <property type="entry name" value="PHOSPHATE-SPECIFIC TRANSPORT SYSTEM ACCESSORY PROTEIN PHOU"/>
    <property type="match status" value="1"/>
</dbReference>
<dbReference type="PANTHER" id="PTHR42930:SF3">
    <property type="entry name" value="PHOSPHATE-SPECIFIC TRANSPORT SYSTEM ACCESSORY PROTEIN PHOU"/>
    <property type="match status" value="1"/>
</dbReference>
<dbReference type="Pfam" id="PF01895">
    <property type="entry name" value="PhoU"/>
    <property type="match status" value="2"/>
</dbReference>
<dbReference type="PIRSF" id="PIRSF003107">
    <property type="entry name" value="PhoU"/>
    <property type="match status" value="1"/>
</dbReference>
<dbReference type="SUPFAM" id="SSF109755">
    <property type="entry name" value="PhoU-like"/>
    <property type="match status" value="1"/>
</dbReference>
<keyword id="KW-0963">Cytoplasm</keyword>
<keyword id="KW-0592">Phosphate transport</keyword>
<keyword id="KW-1185">Reference proteome</keyword>
<keyword id="KW-0813">Transport</keyword>
<reference key="1">
    <citation type="journal article" date="1999" name="J. Bacteriol.">
        <title>Identification of a Streptococcus pneumoniae gene locus encoding proteins of an ABC phosphate transporter and a two-component regulatory system.</title>
        <authorList>
            <person name="Novak R."/>
            <person name="Cauwels A."/>
            <person name="Charpentier E."/>
            <person name="Tuomanen E."/>
        </authorList>
    </citation>
    <scope>NUCLEOTIDE SEQUENCE [GENOMIC DNA]</scope>
    <source>
        <strain>R6x</strain>
    </source>
</reference>
<reference key="2">
    <citation type="journal article" date="2001" name="J. Bacteriol.">
        <title>Genome of the bacterium Streptococcus pneumoniae strain R6.</title>
        <authorList>
            <person name="Hoskins J."/>
            <person name="Alborn W.E. Jr."/>
            <person name="Arnold J."/>
            <person name="Blaszczak L.C."/>
            <person name="Burgett S."/>
            <person name="DeHoff B.S."/>
            <person name="Estrem S.T."/>
            <person name="Fritz L."/>
            <person name="Fu D.-J."/>
            <person name="Fuller W."/>
            <person name="Geringer C."/>
            <person name="Gilmour R."/>
            <person name="Glass J.S."/>
            <person name="Khoja H."/>
            <person name="Kraft A.R."/>
            <person name="Lagace R.E."/>
            <person name="LeBlanc D.J."/>
            <person name="Lee L.N."/>
            <person name="Lefkowitz E.J."/>
            <person name="Lu J."/>
            <person name="Matsushima P."/>
            <person name="McAhren S.M."/>
            <person name="McHenney M."/>
            <person name="McLeaster K."/>
            <person name="Mundy C.W."/>
            <person name="Nicas T.I."/>
            <person name="Norris F.H."/>
            <person name="O'Gara M."/>
            <person name="Peery R.B."/>
            <person name="Robertson G.T."/>
            <person name="Rockey P."/>
            <person name="Sun P.-M."/>
            <person name="Winkler M.E."/>
            <person name="Yang Y."/>
            <person name="Young-Bellido M."/>
            <person name="Zhao G."/>
            <person name="Zook C.A."/>
            <person name="Baltz R.H."/>
            <person name="Jaskunas S.R."/>
            <person name="Rosteck P.R. Jr."/>
            <person name="Skatrud P.L."/>
            <person name="Glass J.I."/>
        </authorList>
    </citation>
    <scope>NUCLEOTIDE SEQUENCE [LARGE SCALE GENOMIC DNA]</scope>
    <source>
        <strain>ATCC BAA-255 / R6</strain>
    </source>
</reference>
<comment type="function">
    <text evidence="1">Plays a role in the regulation of phosphate uptake.</text>
</comment>
<comment type="subunit">
    <text evidence="1">Homodimer.</text>
</comment>
<comment type="subcellular location">
    <subcellularLocation>
        <location evidence="1">Cytoplasm</location>
    </subcellularLocation>
</comment>
<comment type="similarity">
    <text evidence="2">Belongs to the PhoU family.</text>
</comment>
<organism>
    <name type="scientific">Streptococcus pneumoniae (strain ATCC BAA-255 / R6)</name>
    <dbReference type="NCBI Taxonomy" id="171101"/>
    <lineage>
        <taxon>Bacteria</taxon>
        <taxon>Bacillati</taxon>
        <taxon>Bacillota</taxon>
        <taxon>Bacilli</taxon>
        <taxon>Lactobacillales</taxon>
        <taxon>Streptococcaceae</taxon>
        <taxon>Streptococcus</taxon>
    </lineage>
</organism>
<protein>
    <recommendedName>
        <fullName>Phosphate-specific transport system accessory protein PhoU homolog</fullName>
        <shortName>Pst system accessory protein PhoU homolog</shortName>
    </recommendedName>
</protein>
<accession>P0A3Y8</accession>
<accession>Q9X4T4</accession>
<name>PHOU_STRR6</name>
<evidence type="ECO:0000250" key="1"/>
<evidence type="ECO:0000305" key="2"/>
<gene>
    <name type="primary">phoU</name>
    <name type="ordered locus">spr1899</name>
</gene>
<sequence>MRNQFDLELHELEQSFLGLGQLVLETASKALLALASKDKEMAELIINKDHAINQGQSAIELTCARLLALQQPQVSDLRFVISIMSSCSDLERMGDHMAGIAKAVLQLKENQLAPDEEQLHQMGKLSLSMLADLLVAFPLHQASKAISIAQKDEQIDQYYYALSKEIIGLMKDQETSIPNGTQYLYIIGHLERFADYIANICERLVYLETGELVDLN</sequence>